<name>MRAY_ECOLC</name>
<organism>
    <name type="scientific">Escherichia coli (strain ATCC 8739 / DSM 1576 / NBRC 3972 / NCIMB 8545 / WDCM 00012 / Crooks)</name>
    <dbReference type="NCBI Taxonomy" id="481805"/>
    <lineage>
        <taxon>Bacteria</taxon>
        <taxon>Pseudomonadati</taxon>
        <taxon>Pseudomonadota</taxon>
        <taxon>Gammaproteobacteria</taxon>
        <taxon>Enterobacterales</taxon>
        <taxon>Enterobacteriaceae</taxon>
        <taxon>Escherichia</taxon>
    </lineage>
</organism>
<keyword id="KW-0131">Cell cycle</keyword>
<keyword id="KW-0132">Cell division</keyword>
<keyword id="KW-0997">Cell inner membrane</keyword>
<keyword id="KW-1003">Cell membrane</keyword>
<keyword id="KW-0133">Cell shape</keyword>
<keyword id="KW-0961">Cell wall biogenesis/degradation</keyword>
<keyword id="KW-0460">Magnesium</keyword>
<keyword id="KW-0472">Membrane</keyword>
<keyword id="KW-0479">Metal-binding</keyword>
<keyword id="KW-0573">Peptidoglycan synthesis</keyword>
<keyword id="KW-0808">Transferase</keyword>
<keyword id="KW-0812">Transmembrane</keyword>
<keyword id="KW-1133">Transmembrane helix</keyword>
<sequence length="360" mass="39875">MLVWLAEHLVKYYSGFNVFSYLTFRAIVSLLTALFISLWMGPRMIAHLQKLSFGQVVRNDGPESHFSKRGTPTMGGIMILTAIVISVLLWAYPSNPYVWCVLVVLVGYGVIGFVDDYRKVVRKDTKGLIARWKYFWMSVIALGVAFALYLAGKDTPATQLVVPFFKDVMPQLGLFYILLAYFVIVGTGNAVNLTDGLDGLAIMPTVFVAGGFALVAWATGNMNFASYLHIPYLRHAGELVIVCTAIVGAGLGFLWFNTYPAQVFMGDVGSLALGGALGIIAVLLRQEFLLVIMGGVFVVETLSVILQVGSFKLRGQRIFRMAPIHHHYELKGWPEPRVIVRFWIISLMLVLIGLATLKVR</sequence>
<proteinExistence type="inferred from homology"/>
<protein>
    <recommendedName>
        <fullName evidence="1">Phospho-N-acetylmuramoyl-pentapeptide-transferase</fullName>
        <ecNumber evidence="1">2.7.8.13</ecNumber>
    </recommendedName>
    <alternativeName>
        <fullName evidence="1">UDP-MurNAc-pentapeptide phosphotransferase</fullName>
    </alternativeName>
</protein>
<comment type="function">
    <text evidence="1">Catalyzes the initial step of the lipid cycle reactions in the biosynthesis of the cell wall peptidoglycan: transfers peptidoglycan precursor phospho-MurNAc-pentapeptide from UDP-MurNAc-pentapeptide onto the lipid carrier undecaprenyl phosphate, yielding undecaprenyl-pyrophosphoryl-MurNAc-pentapeptide, known as lipid I.</text>
</comment>
<comment type="catalytic activity">
    <reaction evidence="1">
        <text>UDP-N-acetyl-alpha-D-muramoyl-L-alanyl-gamma-D-glutamyl-meso-2,6-diaminopimeloyl-D-alanyl-D-alanine + di-trans,octa-cis-undecaprenyl phosphate = di-trans,octa-cis-undecaprenyl diphospho-N-acetyl-alpha-D-muramoyl-L-alanyl-D-glutamyl-meso-2,6-diaminopimeloyl-D-alanyl-D-alanine + UMP</text>
        <dbReference type="Rhea" id="RHEA:28386"/>
        <dbReference type="ChEBI" id="CHEBI:57865"/>
        <dbReference type="ChEBI" id="CHEBI:60392"/>
        <dbReference type="ChEBI" id="CHEBI:61386"/>
        <dbReference type="ChEBI" id="CHEBI:61387"/>
        <dbReference type="EC" id="2.7.8.13"/>
    </reaction>
</comment>
<comment type="cofactor">
    <cofactor evidence="1">
        <name>Mg(2+)</name>
        <dbReference type="ChEBI" id="CHEBI:18420"/>
    </cofactor>
</comment>
<comment type="pathway">
    <text evidence="1">Cell wall biogenesis; peptidoglycan biosynthesis.</text>
</comment>
<comment type="subcellular location">
    <subcellularLocation>
        <location evidence="1">Cell inner membrane</location>
        <topology evidence="1">Multi-pass membrane protein</topology>
    </subcellularLocation>
</comment>
<comment type="similarity">
    <text evidence="1">Belongs to the glycosyltransferase 4 family. MraY subfamily.</text>
</comment>
<accession>B1IR91</accession>
<dbReference type="EC" id="2.7.8.13" evidence="1"/>
<dbReference type="EMBL" id="CP000946">
    <property type="protein sequence ID" value="ACA79184.1"/>
    <property type="molecule type" value="Genomic_DNA"/>
</dbReference>
<dbReference type="RefSeq" id="WP_000964131.1">
    <property type="nucleotide sequence ID" value="NZ_MTFT01000035.1"/>
</dbReference>
<dbReference type="SMR" id="B1IR91"/>
<dbReference type="GeneID" id="93777347"/>
<dbReference type="KEGG" id="ecl:EcolC_3570"/>
<dbReference type="HOGENOM" id="CLU_023982_0_0_6"/>
<dbReference type="UniPathway" id="UPA00219"/>
<dbReference type="GO" id="GO:0005886">
    <property type="term" value="C:plasma membrane"/>
    <property type="evidence" value="ECO:0007669"/>
    <property type="project" value="UniProtKB-SubCell"/>
</dbReference>
<dbReference type="GO" id="GO:0046872">
    <property type="term" value="F:metal ion binding"/>
    <property type="evidence" value="ECO:0007669"/>
    <property type="project" value="UniProtKB-KW"/>
</dbReference>
<dbReference type="GO" id="GO:0008963">
    <property type="term" value="F:phospho-N-acetylmuramoyl-pentapeptide-transferase activity"/>
    <property type="evidence" value="ECO:0007669"/>
    <property type="project" value="UniProtKB-UniRule"/>
</dbReference>
<dbReference type="GO" id="GO:0051992">
    <property type="term" value="F:UDP-N-acetylmuramoyl-L-alanyl-D-glutamyl-meso-2,6-diaminopimelyl-D-alanyl-D-alanine:undecaprenyl-phosphate transferase activity"/>
    <property type="evidence" value="ECO:0007669"/>
    <property type="project" value="RHEA"/>
</dbReference>
<dbReference type="GO" id="GO:0051301">
    <property type="term" value="P:cell division"/>
    <property type="evidence" value="ECO:0007669"/>
    <property type="project" value="UniProtKB-KW"/>
</dbReference>
<dbReference type="GO" id="GO:0071555">
    <property type="term" value="P:cell wall organization"/>
    <property type="evidence" value="ECO:0007669"/>
    <property type="project" value="UniProtKB-KW"/>
</dbReference>
<dbReference type="GO" id="GO:0009252">
    <property type="term" value="P:peptidoglycan biosynthetic process"/>
    <property type="evidence" value="ECO:0007669"/>
    <property type="project" value="UniProtKB-UniRule"/>
</dbReference>
<dbReference type="GO" id="GO:0008360">
    <property type="term" value="P:regulation of cell shape"/>
    <property type="evidence" value="ECO:0007669"/>
    <property type="project" value="UniProtKB-KW"/>
</dbReference>
<dbReference type="CDD" id="cd06852">
    <property type="entry name" value="GT_MraY"/>
    <property type="match status" value="1"/>
</dbReference>
<dbReference type="HAMAP" id="MF_00038">
    <property type="entry name" value="MraY"/>
    <property type="match status" value="1"/>
</dbReference>
<dbReference type="InterPro" id="IPR000715">
    <property type="entry name" value="Glycosyl_transferase_4"/>
</dbReference>
<dbReference type="InterPro" id="IPR003524">
    <property type="entry name" value="PNAcMuramoyl-5peptid_Trfase"/>
</dbReference>
<dbReference type="InterPro" id="IPR018480">
    <property type="entry name" value="PNAcMuramoyl-5peptid_Trfase_CS"/>
</dbReference>
<dbReference type="NCBIfam" id="TIGR00445">
    <property type="entry name" value="mraY"/>
    <property type="match status" value="1"/>
</dbReference>
<dbReference type="PANTHER" id="PTHR22926">
    <property type="entry name" value="PHOSPHO-N-ACETYLMURAMOYL-PENTAPEPTIDE-TRANSFERASE"/>
    <property type="match status" value="1"/>
</dbReference>
<dbReference type="PANTHER" id="PTHR22926:SF5">
    <property type="entry name" value="PHOSPHO-N-ACETYLMURAMOYL-PENTAPEPTIDE-TRANSFERASE HOMOLOG"/>
    <property type="match status" value="1"/>
</dbReference>
<dbReference type="Pfam" id="PF00953">
    <property type="entry name" value="Glycos_transf_4"/>
    <property type="match status" value="1"/>
</dbReference>
<dbReference type="Pfam" id="PF10555">
    <property type="entry name" value="MraY_sig1"/>
    <property type="match status" value="1"/>
</dbReference>
<dbReference type="PROSITE" id="PS01347">
    <property type="entry name" value="MRAY_1"/>
    <property type="match status" value="1"/>
</dbReference>
<dbReference type="PROSITE" id="PS01348">
    <property type="entry name" value="MRAY_2"/>
    <property type="match status" value="1"/>
</dbReference>
<feature type="chain" id="PRO_1000074542" description="Phospho-N-acetylmuramoyl-pentapeptide-transferase">
    <location>
        <begin position="1"/>
        <end position="360"/>
    </location>
</feature>
<feature type="topological domain" description="Periplasmic" evidence="1">
    <location>
        <begin position="1"/>
        <end position="25"/>
    </location>
</feature>
<feature type="transmembrane region" description="Helical" evidence="1">
    <location>
        <begin position="26"/>
        <end position="46"/>
    </location>
</feature>
<feature type="topological domain" description="Cytoplasmic" evidence="1">
    <location>
        <begin position="47"/>
        <end position="71"/>
    </location>
</feature>
<feature type="transmembrane region" description="Helical" evidence="1">
    <location>
        <begin position="72"/>
        <end position="92"/>
    </location>
</feature>
<feature type="topological domain" description="Periplasmic" evidence="1">
    <location>
        <position position="93"/>
    </location>
</feature>
<feature type="transmembrane region" description="Helical" evidence="1">
    <location>
        <begin position="94"/>
        <end position="114"/>
    </location>
</feature>
<feature type="topological domain" description="Cytoplasmic" evidence="1">
    <location>
        <begin position="115"/>
        <end position="131"/>
    </location>
</feature>
<feature type="transmembrane region" description="Helical" evidence="1">
    <location>
        <begin position="132"/>
        <end position="152"/>
    </location>
</feature>
<feature type="topological domain" description="Periplasmic" evidence="1">
    <location>
        <begin position="153"/>
        <end position="167"/>
    </location>
</feature>
<feature type="transmembrane region" description="Helical" evidence="1">
    <location>
        <begin position="168"/>
        <end position="188"/>
    </location>
</feature>
<feature type="topological domain" description="Cytoplasmic" evidence="1">
    <location>
        <begin position="189"/>
        <end position="198"/>
    </location>
</feature>
<feature type="transmembrane region" description="Helical" evidence="1">
    <location>
        <begin position="199"/>
        <end position="219"/>
    </location>
</feature>
<feature type="topological domain" description="Periplasmic" evidence="1">
    <location>
        <begin position="220"/>
        <end position="235"/>
    </location>
</feature>
<feature type="transmembrane region" description="Helical" evidence="1">
    <location>
        <begin position="236"/>
        <end position="256"/>
    </location>
</feature>
<feature type="topological domain" description="Cytoplasmic" evidence="1">
    <location>
        <begin position="257"/>
        <end position="262"/>
    </location>
</feature>
<feature type="transmembrane region" description="Helical" evidence="1">
    <location>
        <begin position="263"/>
        <end position="283"/>
    </location>
</feature>
<feature type="topological domain" description="Periplasmic" evidence="1">
    <location>
        <begin position="284"/>
        <end position="287"/>
    </location>
</feature>
<feature type="transmembrane region" description="Helical" evidence="1">
    <location>
        <begin position="288"/>
        <end position="308"/>
    </location>
</feature>
<feature type="topological domain" description="Cytoplasmic" evidence="1">
    <location>
        <begin position="309"/>
        <end position="337"/>
    </location>
</feature>
<feature type="transmembrane region" description="Helical" evidence="1">
    <location>
        <begin position="338"/>
        <end position="358"/>
    </location>
</feature>
<feature type="topological domain" description="Periplasmic" evidence="1">
    <location>
        <begin position="359"/>
        <end position="360"/>
    </location>
</feature>
<evidence type="ECO:0000255" key="1">
    <source>
        <dbReference type="HAMAP-Rule" id="MF_00038"/>
    </source>
</evidence>
<reference key="1">
    <citation type="submission" date="2008-02" db="EMBL/GenBank/DDBJ databases">
        <title>Complete sequence of Escherichia coli C str. ATCC 8739.</title>
        <authorList>
            <person name="Copeland A."/>
            <person name="Lucas S."/>
            <person name="Lapidus A."/>
            <person name="Glavina del Rio T."/>
            <person name="Dalin E."/>
            <person name="Tice H."/>
            <person name="Bruce D."/>
            <person name="Goodwin L."/>
            <person name="Pitluck S."/>
            <person name="Kiss H."/>
            <person name="Brettin T."/>
            <person name="Detter J.C."/>
            <person name="Han C."/>
            <person name="Kuske C.R."/>
            <person name="Schmutz J."/>
            <person name="Larimer F."/>
            <person name="Land M."/>
            <person name="Hauser L."/>
            <person name="Kyrpides N."/>
            <person name="Mikhailova N."/>
            <person name="Ingram L."/>
            <person name="Richardson P."/>
        </authorList>
    </citation>
    <scope>NUCLEOTIDE SEQUENCE [LARGE SCALE GENOMIC DNA]</scope>
    <source>
        <strain>ATCC 8739 / DSM 1576 / NBRC 3972 / NCIMB 8545 / WDCM 00012 / Crooks</strain>
    </source>
</reference>
<gene>
    <name evidence="1" type="primary">mraY</name>
    <name type="ordered locus">EcolC_3570</name>
</gene>